<reference key="1">
    <citation type="journal article" date="1991" name="Gene">
        <title>Four types of IS1 with differences in nucleotide sequence reside in the Escherichia coli K-12 chromosome.</title>
        <authorList>
            <person name="Umeda M."/>
            <person name="Ohtsubo E."/>
        </authorList>
    </citation>
    <scope>NUCLEOTIDE SEQUENCE [GENOMIC DNA]</scope>
    <source>
        <strain>K12 / W3110 / ATCC 27325 / DSM 5911</strain>
    </source>
</reference>
<reference key="2">
    <citation type="journal article" date="1996" name="DNA Res.">
        <title>A 718-kb DNA sequence of the Escherichia coli K-12 genome corresponding to the 12.7-28.0 min region on the linkage map.</title>
        <authorList>
            <person name="Oshima T."/>
            <person name="Aiba H."/>
            <person name="Baba T."/>
            <person name="Fujita K."/>
            <person name="Hayashi K."/>
            <person name="Honjo A."/>
            <person name="Ikemoto K."/>
            <person name="Inada T."/>
            <person name="Itoh T."/>
            <person name="Kajihara M."/>
            <person name="Kanai K."/>
            <person name="Kashimoto K."/>
            <person name="Kimura S."/>
            <person name="Kitagawa M."/>
            <person name="Makino K."/>
            <person name="Masuda S."/>
            <person name="Miki T."/>
            <person name="Mizobuchi K."/>
            <person name="Mori H."/>
            <person name="Motomura K."/>
            <person name="Nakamura Y."/>
            <person name="Nashimoto H."/>
            <person name="Nishio Y."/>
            <person name="Saito N."/>
            <person name="Sampei G."/>
            <person name="Seki Y."/>
            <person name="Tagami H."/>
            <person name="Takemoto K."/>
            <person name="Wada C."/>
            <person name="Yamamoto Y."/>
            <person name="Yano M."/>
            <person name="Horiuchi T."/>
        </authorList>
    </citation>
    <scope>NUCLEOTIDE SEQUENCE [LARGE SCALE GENOMIC DNA]</scope>
    <source>
        <strain>K12 / W3110 / ATCC 27325 / DSM 5911</strain>
    </source>
</reference>
<reference key="3">
    <citation type="journal article" date="1997" name="Science">
        <title>The complete genome sequence of Escherichia coli K-12.</title>
        <authorList>
            <person name="Blattner F.R."/>
            <person name="Plunkett G. III"/>
            <person name="Bloch C.A."/>
            <person name="Perna N.T."/>
            <person name="Burland V."/>
            <person name="Riley M."/>
            <person name="Collado-Vides J."/>
            <person name="Glasner J.D."/>
            <person name="Rode C.K."/>
            <person name="Mayhew G.F."/>
            <person name="Gregor J."/>
            <person name="Davis N.W."/>
            <person name="Kirkpatrick H.A."/>
            <person name="Goeden M.A."/>
            <person name="Rose D.J."/>
            <person name="Mau B."/>
            <person name="Shao Y."/>
        </authorList>
    </citation>
    <scope>NUCLEOTIDE SEQUENCE [LARGE SCALE GENOMIC DNA]</scope>
    <source>
        <strain>K12 / MG1655 / ATCC 47076</strain>
    </source>
</reference>
<reference key="4">
    <citation type="journal article" date="2006" name="Mol. Syst. Biol.">
        <title>Highly accurate genome sequences of Escherichia coli K-12 strains MG1655 and W3110.</title>
        <authorList>
            <person name="Hayashi K."/>
            <person name="Morooka N."/>
            <person name="Yamamoto Y."/>
            <person name="Fujita K."/>
            <person name="Isono K."/>
            <person name="Choi S."/>
            <person name="Ohtsubo E."/>
            <person name="Baba T."/>
            <person name="Wanner B.L."/>
            <person name="Mori H."/>
            <person name="Horiuchi T."/>
        </authorList>
    </citation>
    <scope>NUCLEOTIDE SEQUENCE [LARGE SCALE GENOMIC DNA]</scope>
    <source>
        <strain>K12 / W3110 / ATCC 27325 / DSM 5911</strain>
    </source>
</reference>
<protein>
    <recommendedName>
        <fullName>Insertion element IS1 4 protein InsB</fullName>
    </recommendedName>
    <alternativeName>
        <fullName>IS1d</fullName>
    </alternativeName>
</protein>
<comment type="function">
    <text>Absolutely required for transposition of IS1.</text>
</comment>
<comment type="similarity">
    <text evidence="1">Belongs to the transposase 27 family.</text>
</comment>
<dbReference type="EMBL" id="X52536">
    <property type="status" value="NOT_ANNOTATED_CDS"/>
    <property type="molecule type" value="Genomic_DNA"/>
</dbReference>
<dbReference type="EMBL" id="U00096">
    <property type="protein sequence ID" value="AAC74073.1"/>
    <property type="molecule type" value="Genomic_DNA"/>
</dbReference>
<dbReference type="EMBL" id="AP009048">
    <property type="protein sequence ID" value="BAA35754.1"/>
    <property type="molecule type" value="Genomic_DNA"/>
</dbReference>
<dbReference type="RefSeq" id="NP_415508.1">
    <property type="nucleotide sequence ID" value="NC_000913.3"/>
</dbReference>
<dbReference type="BioGRID" id="4262042">
    <property type="interactions" value="3"/>
</dbReference>
<dbReference type="FunCoup" id="P57998">
    <property type="interactions" value="28"/>
</dbReference>
<dbReference type="IntAct" id="P57998">
    <property type="interactions" value="2"/>
</dbReference>
<dbReference type="STRING" id="511145.b0988"/>
<dbReference type="PaxDb" id="511145-b0988"/>
<dbReference type="EnsemblBacteria" id="AAC74073">
    <property type="protein sequence ID" value="AAC74073"/>
    <property type="gene ID" value="b0988"/>
</dbReference>
<dbReference type="GeneID" id="945009"/>
<dbReference type="KEGG" id="ecj:JW0972"/>
<dbReference type="KEGG" id="eco:b0988"/>
<dbReference type="KEGG" id="ecoc:C3026_06025"/>
<dbReference type="PATRIC" id="fig|511145.12.peg.1024"/>
<dbReference type="EchoBASE" id="EB4719"/>
<dbReference type="eggNOG" id="COG1662">
    <property type="taxonomic scope" value="Bacteria"/>
</dbReference>
<dbReference type="HOGENOM" id="CLU_076276_2_1_6"/>
<dbReference type="InParanoid" id="P57998"/>
<dbReference type="OMA" id="WAFGLNT"/>
<dbReference type="PhylomeDB" id="P57998"/>
<dbReference type="BioCyc" id="EcoCyc:G6509-MONOMER"/>
<dbReference type="PRO" id="PR:P57998"/>
<dbReference type="Proteomes" id="UP000000625">
    <property type="component" value="Chromosome"/>
</dbReference>
<dbReference type="GO" id="GO:0003677">
    <property type="term" value="F:DNA binding"/>
    <property type="evidence" value="ECO:0007669"/>
    <property type="project" value="InterPro"/>
</dbReference>
<dbReference type="GO" id="GO:0004803">
    <property type="term" value="F:transposase activity"/>
    <property type="evidence" value="ECO:0007669"/>
    <property type="project" value="InterPro"/>
</dbReference>
<dbReference type="GO" id="GO:0006313">
    <property type="term" value="P:DNA transposition"/>
    <property type="evidence" value="ECO:0000315"/>
    <property type="project" value="EcoCyc"/>
</dbReference>
<dbReference type="InterPro" id="IPR005063">
    <property type="entry name" value="Transposase_27"/>
</dbReference>
<dbReference type="InterPro" id="IPR051354">
    <property type="entry name" value="Transposase_27_IS1"/>
</dbReference>
<dbReference type="NCBIfam" id="NF033558">
    <property type="entry name" value="transpos_IS1"/>
    <property type="match status" value="1"/>
</dbReference>
<dbReference type="PANTHER" id="PTHR33293">
    <property type="entry name" value="INSERTION ELEMENT IS1 1 PROTEIN INSB-RELATED"/>
    <property type="match status" value="1"/>
</dbReference>
<dbReference type="PANTHER" id="PTHR33293:SF1">
    <property type="entry name" value="INSERTION ELEMENT IS1 1 PROTEIN INSB-RELATED"/>
    <property type="match status" value="1"/>
</dbReference>
<dbReference type="Pfam" id="PF03400">
    <property type="entry name" value="DDE_Tnp_IS1"/>
    <property type="match status" value="1"/>
</dbReference>
<proteinExistence type="inferred from homology"/>
<organism>
    <name type="scientific">Escherichia coli (strain K12)</name>
    <dbReference type="NCBI Taxonomy" id="83333"/>
    <lineage>
        <taxon>Bacteria</taxon>
        <taxon>Pseudomonadati</taxon>
        <taxon>Pseudomonadota</taxon>
        <taxon>Gammaproteobacteria</taxon>
        <taxon>Enterobacterales</taxon>
        <taxon>Enterobacteriaceae</taxon>
        <taxon>Escherichia</taxon>
    </lineage>
</organism>
<evidence type="ECO:0000305" key="1"/>
<accession>P57998</accession>
<sequence length="167" mass="19700">MPGNSPHYGRWPQHDFPPFKKLRPQSVTSRIQPGSDVIVCAEMDEQWGYVGAKSRQRWLFYAYDRLRKTVVAHVFGERTMATLGRLMSLLSPFDVVIWMTDGWPLYESRLKGKLHVISKRYTQRIERYNLNLRQHLARLGRKSLSFSKSVELHDKVIGHYLNIKHYQ</sequence>
<name>INSB4_ECOLI</name>
<feature type="chain" id="PRO_0000075403" description="Insertion element IS1 4 protein InsB">
    <location>
        <begin position="1"/>
        <end position="167"/>
    </location>
</feature>
<keyword id="KW-0233">DNA recombination</keyword>
<keyword id="KW-1185">Reference proteome</keyword>
<keyword id="KW-0814">Transposable element</keyword>
<keyword id="KW-0815">Transposition</keyword>
<gene>
    <name type="primary">insB4</name>
    <name type="ordered locus">b0988</name>
    <name type="ordered locus">JW0972</name>
</gene>